<organism>
    <name type="scientific">Methylibium petroleiphilum (strain ATCC BAA-1232 / LMG 22953 / PM1)</name>
    <dbReference type="NCBI Taxonomy" id="420662"/>
    <lineage>
        <taxon>Bacteria</taxon>
        <taxon>Pseudomonadati</taxon>
        <taxon>Pseudomonadota</taxon>
        <taxon>Betaproteobacteria</taxon>
        <taxon>Burkholderiales</taxon>
        <taxon>Sphaerotilaceae</taxon>
        <taxon>Methylibium</taxon>
    </lineage>
</organism>
<evidence type="ECO:0000255" key="1">
    <source>
        <dbReference type="HAMAP-Rule" id="MF_00807"/>
    </source>
</evidence>
<name>1A1D_METPP</name>
<reference key="1">
    <citation type="journal article" date="2007" name="J. Bacteriol.">
        <title>Whole-genome analysis of the methyl tert-butyl ether-degrading beta-proteobacterium Methylibium petroleiphilum PM1.</title>
        <authorList>
            <person name="Kane S.R."/>
            <person name="Chakicherla A.Y."/>
            <person name="Chain P.S.G."/>
            <person name="Schmidt R."/>
            <person name="Shin M.W."/>
            <person name="Legler T.C."/>
            <person name="Scow K.M."/>
            <person name="Larimer F.W."/>
            <person name="Lucas S.M."/>
            <person name="Richardson P.M."/>
            <person name="Hristova K.R."/>
        </authorList>
    </citation>
    <scope>NUCLEOTIDE SEQUENCE [LARGE SCALE GENOMIC DNA]</scope>
    <source>
        <strain>ATCC BAA-1232 / LMG 22953 / PM1</strain>
    </source>
</reference>
<gene>
    <name evidence="1" type="primary">acdS</name>
    <name type="ordered locus">Mpe_A3598</name>
</gene>
<sequence length="338" mass="36363">MNLQRFPRHPLTFGPTPIQPLKRLSAHLGGQVELYAKREDCNSGLAFGGNKTRKLEYLIPEALAQGCDTLVSIGGIQSNQTRQVAAVAAHLGMKCVLVQENWVNYSDAVYDRVGNIEMSRILGADVRLDAAGFDIGIRPSWEQAMADVRAAGGKPFPIPAGCSEHRLGGLGFVGFAEEVRAQEAELGFKFDYIVVCSVTGSTQAGMVVGFAADGRAERVIGIDASAKPEQTHAQILRIAQNTAELVGLGREITAQDVVLDTRYGGPEYGLPSEGTLEAIRLCARQEGMLTDPVYEGKSMHGMIDKVKRGEFPAGSRVLYAHLGGVPALNAYSFLFRNG</sequence>
<accession>A2SLW2</accession>
<proteinExistence type="inferred from homology"/>
<keyword id="KW-0378">Hydrolase</keyword>
<keyword id="KW-0663">Pyridoxal phosphate</keyword>
<keyword id="KW-1185">Reference proteome</keyword>
<feature type="chain" id="PRO_0000304378" description="1-aminocyclopropane-1-carboxylate deaminase">
    <location>
        <begin position="1"/>
        <end position="338"/>
    </location>
</feature>
<feature type="active site" description="Nucleophile" evidence="1">
    <location>
        <position position="78"/>
    </location>
</feature>
<feature type="modified residue" description="N6-(pyridoxal phosphate)lysine" evidence="1">
    <location>
        <position position="51"/>
    </location>
</feature>
<dbReference type="EC" id="3.5.99.7" evidence="1"/>
<dbReference type="EMBL" id="CP000555">
    <property type="protein sequence ID" value="ABM96551.1"/>
    <property type="molecule type" value="Genomic_DNA"/>
</dbReference>
<dbReference type="RefSeq" id="WP_011831171.1">
    <property type="nucleotide sequence ID" value="NC_008825.1"/>
</dbReference>
<dbReference type="SMR" id="A2SLW2"/>
<dbReference type="KEGG" id="mpt:Mpe_A3598"/>
<dbReference type="eggNOG" id="COG2515">
    <property type="taxonomic scope" value="Bacteria"/>
</dbReference>
<dbReference type="HOGENOM" id="CLU_048897_2_1_4"/>
<dbReference type="Proteomes" id="UP000000366">
    <property type="component" value="Chromosome"/>
</dbReference>
<dbReference type="GO" id="GO:0008660">
    <property type="term" value="F:1-aminocyclopropane-1-carboxylate deaminase activity"/>
    <property type="evidence" value="ECO:0007669"/>
    <property type="project" value="UniProtKB-UniRule"/>
</dbReference>
<dbReference type="GO" id="GO:0019148">
    <property type="term" value="F:D-cysteine desulfhydrase activity"/>
    <property type="evidence" value="ECO:0007669"/>
    <property type="project" value="TreeGrafter"/>
</dbReference>
<dbReference type="GO" id="GO:0030170">
    <property type="term" value="F:pyridoxal phosphate binding"/>
    <property type="evidence" value="ECO:0007669"/>
    <property type="project" value="InterPro"/>
</dbReference>
<dbReference type="GO" id="GO:0018871">
    <property type="term" value="P:1-aminocyclopropane-1-carboxylate metabolic process"/>
    <property type="evidence" value="ECO:0007669"/>
    <property type="project" value="UniProtKB-UniRule"/>
</dbReference>
<dbReference type="GO" id="GO:0009310">
    <property type="term" value="P:amine catabolic process"/>
    <property type="evidence" value="ECO:0007669"/>
    <property type="project" value="InterPro"/>
</dbReference>
<dbReference type="CDD" id="cd06449">
    <property type="entry name" value="ACCD"/>
    <property type="match status" value="1"/>
</dbReference>
<dbReference type="FunFam" id="3.40.50.1100:FF:000048">
    <property type="entry name" value="1-aminocyclopropane-1-carboxylate deaminase"/>
    <property type="match status" value="1"/>
</dbReference>
<dbReference type="FunFam" id="3.40.50.1100:FF:000053">
    <property type="entry name" value="1-aminocyclopropane-1-carboxylate deaminase"/>
    <property type="match status" value="1"/>
</dbReference>
<dbReference type="Gene3D" id="3.40.50.1100">
    <property type="match status" value="2"/>
</dbReference>
<dbReference type="HAMAP" id="MF_00807">
    <property type="entry name" value="ACC_deaminase"/>
    <property type="match status" value="1"/>
</dbReference>
<dbReference type="InterPro" id="IPR027278">
    <property type="entry name" value="ACCD_DCysDesulf"/>
</dbReference>
<dbReference type="InterPro" id="IPR005965">
    <property type="entry name" value="ACP_carboxylate_deaminase"/>
</dbReference>
<dbReference type="InterPro" id="IPR020601">
    <property type="entry name" value="ACP_carboxylate_deaminase_bac"/>
</dbReference>
<dbReference type="InterPro" id="IPR001926">
    <property type="entry name" value="TrpB-like_PALP"/>
</dbReference>
<dbReference type="InterPro" id="IPR036052">
    <property type="entry name" value="TrpB-like_PALP_sf"/>
</dbReference>
<dbReference type="NCBIfam" id="TIGR01274">
    <property type="entry name" value="ACC_deam"/>
    <property type="match status" value="1"/>
</dbReference>
<dbReference type="PANTHER" id="PTHR43780">
    <property type="entry name" value="1-AMINOCYCLOPROPANE-1-CARBOXYLATE DEAMINASE-RELATED"/>
    <property type="match status" value="1"/>
</dbReference>
<dbReference type="PANTHER" id="PTHR43780:SF2">
    <property type="entry name" value="1-AMINOCYCLOPROPANE-1-CARBOXYLATE DEAMINASE-RELATED"/>
    <property type="match status" value="1"/>
</dbReference>
<dbReference type="Pfam" id="PF00291">
    <property type="entry name" value="PALP"/>
    <property type="match status" value="1"/>
</dbReference>
<dbReference type="PIRSF" id="PIRSF006278">
    <property type="entry name" value="ACCD_DCysDesulf"/>
    <property type="match status" value="1"/>
</dbReference>
<dbReference type="SUPFAM" id="SSF53686">
    <property type="entry name" value="Tryptophan synthase beta subunit-like PLP-dependent enzymes"/>
    <property type="match status" value="1"/>
</dbReference>
<comment type="function">
    <text evidence="1">Catalyzes a cyclopropane ring-opening reaction, the irreversible conversion of 1-aminocyclopropane-1-carboxylate (ACC) to ammonia and alpha-ketobutyrate. Allows growth on ACC as a nitrogen source.</text>
</comment>
<comment type="catalytic activity">
    <reaction evidence="1">
        <text>1-aminocyclopropane-1-carboxylate + H2O = 2-oxobutanoate + NH4(+)</text>
        <dbReference type="Rhea" id="RHEA:16933"/>
        <dbReference type="ChEBI" id="CHEBI:15377"/>
        <dbReference type="ChEBI" id="CHEBI:16763"/>
        <dbReference type="ChEBI" id="CHEBI:28938"/>
        <dbReference type="ChEBI" id="CHEBI:58360"/>
        <dbReference type="EC" id="3.5.99.7"/>
    </reaction>
</comment>
<comment type="cofactor">
    <cofactor evidence="1">
        <name>pyridoxal 5'-phosphate</name>
        <dbReference type="ChEBI" id="CHEBI:597326"/>
    </cofactor>
</comment>
<comment type="subunit">
    <text evidence="1">Homotrimer.</text>
</comment>
<comment type="similarity">
    <text evidence="1">Belongs to the ACC deaminase/D-cysteine desulfhydrase family.</text>
</comment>
<protein>
    <recommendedName>
        <fullName evidence="1">1-aminocyclopropane-1-carboxylate deaminase</fullName>
        <shortName evidence="1">ACC deaminase</shortName>
        <shortName evidence="1">ACCD</shortName>
        <ecNumber evidence="1">3.5.99.7</ecNumber>
    </recommendedName>
</protein>